<sequence>MARYENILELEPNLNGEDLSIGIVMSRFNIEASEGLLGACVEELMKQGVDAGNVVLVSVPGALEIPLALQKMALTDQFDALIALGAVIRGETYHFEIVSEQSTNGVSTVQLDTGIPIANGILTTNTDDQALARMSQKGAEAARVAIEMANLQRTLDEMEQ</sequence>
<gene>
    <name evidence="1" type="primary">ribH</name>
    <name type="ordered locus">Nmul_A0011</name>
</gene>
<proteinExistence type="inferred from homology"/>
<organism>
    <name type="scientific">Nitrosospira multiformis (strain ATCC 25196 / NCIMB 11849 / C 71)</name>
    <dbReference type="NCBI Taxonomy" id="323848"/>
    <lineage>
        <taxon>Bacteria</taxon>
        <taxon>Pseudomonadati</taxon>
        <taxon>Pseudomonadota</taxon>
        <taxon>Betaproteobacteria</taxon>
        <taxon>Nitrosomonadales</taxon>
        <taxon>Nitrosomonadaceae</taxon>
        <taxon>Nitrosospira</taxon>
    </lineage>
</organism>
<accession>Q2YD51</accession>
<dbReference type="EC" id="2.5.1.78" evidence="1"/>
<dbReference type="EMBL" id="CP000103">
    <property type="protein sequence ID" value="ABB73320.1"/>
    <property type="molecule type" value="Genomic_DNA"/>
</dbReference>
<dbReference type="RefSeq" id="WP_011379375.1">
    <property type="nucleotide sequence ID" value="NC_007614.1"/>
</dbReference>
<dbReference type="SMR" id="Q2YD51"/>
<dbReference type="STRING" id="323848.Nmul_A0011"/>
<dbReference type="KEGG" id="nmu:Nmul_A0011"/>
<dbReference type="eggNOG" id="COG0054">
    <property type="taxonomic scope" value="Bacteria"/>
</dbReference>
<dbReference type="HOGENOM" id="CLU_089358_1_2_4"/>
<dbReference type="OrthoDB" id="9809709at2"/>
<dbReference type="UniPathway" id="UPA00275">
    <property type="reaction ID" value="UER00404"/>
</dbReference>
<dbReference type="Proteomes" id="UP000002718">
    <property type="component" value="Chromosome"/>
</dbReference>
<dbReference type="GO" id="GO:0005829">
    <property type="term" value="C:cytosol"/>
    <property type="evidence" value="ECO:0007669"/>
    <property type="project" value="TreeGrafter"/>
</dbReference>
<dbReference type="GO" id="GO:0009349">
    <property type="term" value="C:riboflavin synthase complex"/>
    <property type="evidence" value="ECO:0007669"/>
    <property type="project" value="InterPro"/>
</dbReference>
<dbReference type="GO" id="GO:0000906">
    <property type="term" value="F:6,7-dimethyl-8-ribityllumazine synthase activity"/>
    <property type="evidence" value="ECO:0007669"/>
    <property type="project" value="UniProtKB-UniRule"/>
</dbReference>
<dbReference type="GO" id="GO:0009231">
    <property type="term" value="P:riboflavin biosynthetic process"/>
    <property type="evidence" value="ECO:0007669"/>
    <property type="project" value="UniProtKB-UniRule"/>
</dbReference>
<dbReference type="CDD" id="cd09209">
    <property type="entry name" value="Lumazine_synthase-I"/>
    <property type="match status" value="1"/>
</dbReference>
<dbReference type="Gene3D" id="3.40.50.960">
    <property type="entry name" value="Lumazine/riboflavin synthase"/>
    <property type="match status" value="1"/>
</dbReference>
<dbReference type="HAMAP" id="MF_00178">
    <property type="entry name" value="Lumazine_synth"/>
    <property type="match status" value="1"/>
</dbReference>
<dbReference type="InterPro" id="IPR034964">
    <property type="entry name" value="LS"/>
</dbReference>
<dbReference type="InterPro" id="IPR002180">
    <property type="entry name" value="LS/RS"/>
</dbReference>
<dbReference type="InterPro" id="IPR036467">
    <property type="entry name" value="LS/RS_sf"/>
</dbReference>
<dbReference type="NCBIfam" id="TIGR00114">
    <property type="entry name" value="lumazine-synth"/>
    <property type="match status" value="1"/>
</dbReference>
<dbReference type="PANTHER" id="PTHR21058:SF0">
    <property type="entry name" value="6,7-DIMETHYL-8-RIBITYLLUMAZINE SYNTHASE"/>
    <property type="match status" value="1"/>
</dbReference>
<dbReference type="PANTHER" id="PTHR21058">
    <property type="entry name" value="6,7-DIMETHYL-8-RIBITYLLUMAZINE SYNTHASE DMRL SYNTHASE LUMAZINE SYNTHASE"/>
    <property type="match status" value="1"/>
</dbReference>
<dbReference type="Pfam" id="PF00885">
    <property type="entry name" value="DMRL_synthase"/>
    <property type="match status" value="1"/>
</dbReference>
<dbReference type="SUPFAM" id="SSF52121">
    <property type="entry name" value="Lumazine synthase"/>
    <property type="match status" value="1"/>
</dbReference>
<feature type="chain" id="PRO_1000040465" description="6,7-dimethyl-8-ribityllumazine synthase">
    <location>
        <begin position="1"/>
        <end position="160"/>
    </location>
</feature>
<feature type="active site" description="Proton donor" evidence="1">
    <location>
        <position position="94"/>
    </location>
</feature>
<feature type="binding site" evidence="1">
    <location>
        <position position="28"/>
    </location>
    <ligand>
        <name>5-amino-6-(D-ribitylamino)uracil</name>
        <dbReference type="ChEBI" id="CHEBI:15934"/>
    </ligand>
</feature>
<feature type="binding site" evidence="1">
    <location>
        <begin position="62"/>
        <end position="64"/>
    </location>
    <ligand>
        <name>5-amino-6-(D-ribitylamino)uracil</name>
        <dbReference type="ChEBI" id="CHEBI:15934"/>
    </ligand>
</feature>
<feature type="binding site" evidence="1">
    <location>
        <begin position="86"/>
        <end position="88"/>
    </location>
    <ligand>
        <name>5-amino-6-(D-ribitylamino)uracil</name>
        <dbReference type="ChEBI" id="CHEBI:15934"/>
    </ligand>
</feature>
<feature type="binding site" evidence="1">
    <location>
        <begin position="91"/>
        <end position="92"/>
    </location>
    <ligand>
        <name>(2S)-2-hydroxy-3-oxobutyl phosphate</name>
        <dbReference type="ChEBI" id="CHEBI:58830"/>
    </ligand>
</feature>
<feature type="binding site" evidence="1">
    <location>
        <position position="119"/>
    </location>
    <ligand>
        <name>5-amino-6-(D-ribitylamino)uracil</name>
        <dbReference type="ChEBI" id="CHEBI:15934"/>
    </ligand>
</feature>
<feature type="binding site" evidence="1">
    <location>
        <position position="133"/>
    </location>
    <ligand>
        <name>(2S)-2-hydroxy-3-oxobutyl phosphate</name>
        <dbReference type="ChEBI" id="CHEBI:58830"/>
    </ligand>
</feature>
<reference key="1">
    <citation type="submission" date="2005-08" db="EMBL/GenBank/DDBJ databases">
        <title>Complete sequence of chromosome 1 of Nitrosospira multiformis ATCC 25196.</title>
        <authorList>
            <person name="Copeland A."/>
            <person name="Lucas S."/>
            <person name="Lapidus A."/>
            <person name="Barry K."/>
            <person name="Detter J.C."/>
            <person name="Glavina T."/>
            <person name="Hammon N."/>
            <person name="Israni S."/>
            <person name="Pitluck S."/>
            <person name="Chain P."/>
            <person name="Malfatti S."/>
            <person name="Shin M."/>
            <person name="Vergez L."/>
            <person name="Schmutz J."/>
            <person name="Larimer F."/>
            <person name="Land M."/>
            <person name="Hauser L."/>
            <person name="Kyrpides N."/>
            <person name="Lykidis A."/>
            <person name="Richardson P."/>
        </authorList>
    </citation>
    <scope>NUCLEOTIDE SEQUENCE [LARGE SCALE GENOMIC DNA]</scope>
    <source>
        <strain>ATCC 25196 / NCIMB 11849 / C 71</strain>
    </source>
</reference>
<keyword id="KW-1185">Reference proteome</keyword>
<keyword id="KW-0686">Riboflavin biosynthesis</keyword>
<keyword id="KW-0808">Transferase</keyword>
<name>RISB_NITMU</name>
<comment type="function">
    <text evidence="1">Catalyzes the formation of 6,7-dimethyl-8-ribityllumazine by condensation of 5-amino-6-(D-ribitylamino)uracil with 3,4-dihydroxy-2-butanone 4-phosphate. This is the penultimate step in the biosynthesis of riboflavin.</text>
</comment>
<comment type="catalytic activity">
    <reaction evidence="1">
        <text>(2S)-2-hydroxy-3-oxobutyl phosphate + 5-amino-6-(D-ribitylamino)uracil = 6,7-dimethyl-8-(1-D-ribityl)lumazine + phosphate + 2 H2O + H(+)</text>
        <dbReference type="Rhea" id="RHEA:26152"/>
        <dbReference type="ChEBI" id="CHEBI:15377"/>
        <dbReference type="ChEBI" id="CHEBI:15378"/>
        <dbReference type="ChEBI" id="CHEBI:15934"/>
        <dbReference type="ChEBI" id="CHEBI:43474"/>
        <dbReference type="ChEBI" id="CHEBI:58201"/>
        <dbReference type="ChEBI" id="CHEBI:58830"/>
        <dbReference type="EC" id="2.5.1.78"/>
    </reaction>
</comment>
<comment type="pathway">
    <text evidence="1">Cofactor biosynthesis; riboflavin biosynthesis; riboflavin from 2-hydroxy-3-oxobutyl phosphate and 5-amino-6-(D-ribitylamino)uracil: step 1/2.</text>
</comment>
<comment type="similarity">
    <text evidence="1">Belongs to the DMRL synthase family.</text>
</comment>
<protein>
    <recommendedName>
        <fullName evidence="1">6,7-dimethyl-8-ribityllumazine synthase</fullName>
        <shortName evidence="1">DMRL synthase</shortName>
        <shortName evidence="1">LS</shortName>
        <shortName evidence="1">Lumazine synthase</shortName>
        <ecNumber evidence="1">2.5.1.78</ecNumber>
    </recommendedName>
</protein>
<evidence type="ECO:0000255" key="1">
    <source>
        <dbReference type="HAMAP-Rule" id="MF_00178"/>
    </source>
</evidence>